<gene>
    <name evidence="1" type="primary">rplN</name>
    <name type="ordered locus">BMEA_A1268</name>
</gene>
<organism>
    <name type="scientific">Brucella melitensis biotype 2 (strain ATCC 23457)</name>
    <dbReference type="NCBI Taxonomy" id="546272"/>
    <lineage>
        <taxon>Bacteria</taxon>
        <taxon>Pseudomonadati</taxon>
        <taxon>Pseudomonadota</taxon>
        <taxon>Alphaproteobacteria</taxon>
        <taxon>Hyphomicrobiales</taxon>
        <taxon>Brucellaceae</taxon>
        <taxon>Brucella/Ochrobactrum group</taxon>
        <taxon>Brucella</taxon>
    </lineage>
</organism>
<keyword id="KW-0687">Ribonucleoprotein</keyword>
<keyword id="KW-0689">Ribosomal protein</keyword>
<keyword id="KW-0694">RNA-binding</keyword>
<keyword id="KW-0699">rRNA-binding</keyword>
<proteinExistence type="inferred from homology"/>
<evidence type="ECO:0000255" key="1">
    <source>
        <dbReference type="HAMAP-Rule" id="MF_01367"/>
    </source>
</evidence>
<evidence type="ECO:0000305" key="2"/>
<feature type="chain" id="PRO_1000166904" description="Large ribosomal subunit protein uL14">
    <location>
        <begin position="1"/>
        <end position="122"/>
    </location>
</feature>
<accession>C0RJJ1</accession>
<protein>
    <recommendedName>
        <fullName evidence="1">Large ribosomal subunit protein uL14</fullName>
    </recommendedName>
    <alternativeName>
        <fullName evidence="2">50S ribosomal protein L14</fullName>
    </alternativeName>
</protein>
<name>RL14_BRUMB</name>
<sequence>MIQMQTNLDVADNSGARRVMCIKVLGGSKRRYASVGDIIVVSIKEAIPRGRVKKGDVMKAVVVRTAKDIRRPDGSVIRFDNNAAVLIDNKKEPIGTRIFGPVPRELRAKNHMKIISLAPEVL</sequence>
<reference key="1">
    <citation type="submission" date="2009-03" db="EMBL/GenBank/DDBJ databases">
        <title>Brucella melitensis ATCC 23457 whole genome shotgun sequencing project.</title>
        <authorList>
            <person name="Setubal J.C."/>
            <person name="Boyle S."/>
            <person name="Crasta O.R."/>
            <person name="Gillespie J.J."/>
            <person name="Kenyon R.W."/>
            <person name="Lu J."/>
            <person name="Mane S."/>
            <person name="Nagrani S."/>
            <person name="Shallom J.M."/>
            <person name="Shallom S."/>
            <person name="Shukla M."/>
            <person name="Snyder E.E."/>
            <person name="Sobral B.W."/>
            <person name="Wattam A.R."/>
            <person name="Will R."/>
            <person name="Williams K."/>
            <person name="Yoo H."/>
            <person name="Munk C."/>
            <person name="Tapia R."/>
            <person name="Han C."/>
            <person name="Detter J.C."/>
            <person name="Bruce D."/>
            <person name="Brettin T.S."/>
        </authorList>
    </citation>
    <scope>NUCLEOTIDE SEQUENCE [LARGE SCALE GENOMIC DNA]</scope>
    <source>
        <strain>ATCC 23457</strain>
    </source>
</reference>
<comment type="function">
    <text evidence="1">Binds to 23S rRNA. Forms part of two intersubunit bridges in the 70S ribosome.</text>
</comment>
<comment type="subunit">
    <text evidence="1">Part of the 50S ribosomal subunit. Forms a cluster with proteins L3 and L19. In the 70S ribosome, L14 and L19 interact and together make contacts with the 16S rRNA in bridges B5 and B8.</text>
</comment>
<comment type="similarity">
    <text evidence="1">Belongs to the universal ribosomal protein uL14 family.</text>
</comment>
<dbReference type="EMBL" id="CP001488">
    <property type="protein sequence ID" value="ACO00999.1"/>
    <property type="molecule type" value="Genomic_DNA"/>
</dbReference>
<dbReference type="RefSeq" id="WP_004683923.1">
    <property type="nucleotide sequence ID" value="NC_012441.1"/>
</dbReference>
<dbReference type="SMR" id="C0RJJ1"/>
<dbReference type="GeneID" id="97533534"/>
<dbReference type="KEGG" id="bmi:BMEA_A1268"/>
<dbReference type="HOGENOM" id="CLU_095071_2_1_5"/>
<dbReference type="Proteomes" id="UP000001748">
    <property type="component" value="Chromosome I"/>
</dbReference>
<dbReference type="GO" id="GO:0022625">
    <property type="term" value="C:cytosolic large ribosomal subunit"/>
    <property type="evidence" value="ECO:0007669"/>
    <property type="project" value="TreeGrafter"/>
</dbReference>
<dbReference type="GO" id="GO:0070180">
    <property type="term" value="F:large ribosomal subunit rRNA binding"/>
    <property type="evidence" value="ECO:0007669"/>
    <property type="project" value="TreeGrafter"/>
</dbReference>
<dbReference type="GO" id="GO:0003735">
    <property type="term" value="F:structural constituent of ribosome"/>
    <property type="evidence" value="ECO:0007669"/>
    <property type="project" value="InterPro"/>
</dbReference>
<dbReference type="GO" id="GO:0006412">
    <property type="term" value="P:translation"/>
    <property type="evidence" value="ECO:0007669"/>
    <property type="project" value="UniProtKB-UniRule"/>
</dbReference>
<dbReference type="CDD" id="cd00337">
    <property type="entry name" value="Ribosomal_uL14"/>
    <property type="match status" value="1"/>
</dbReference>
<dbReference type="FunFam" id="2.40.150.20:FF:000001">
    <property type="entry name" value="50S ribosomal protein L14"/>
    <property type="match status" value="1"/>
</dbReference>
<dbReference type="Gene3D" id="2.40.150.20">
    <property type="entry name" value="Ribosomal protein L14"/>
    <property type="match status" value="1"/>
</dbReference>
<dbReference type="HAMAP" id="MF_01367">
    <property type="entry name" value="Ribosomal_uL14"/>
    <property type="match status" value="1"/>
</dbReference>
<dbReference type="InterPro" id="IPR000218">
    <property type="entry name" value="Ribosomal_uL14"/>
</dbReference>
<dbReference type="InterPro" id="IPR005745">
    <property type="entry name" value="Ribosomal_uL14_bac-type"/>
</dbReference>
<dbReference type="InterPro" id="IPR019972">
    <property type="entry name" value="Ribosomal_uL14_CS"/>
</dbReference>
<dbReference type="InterPro" id="IPR036853">
    <property type="entry name" value="Ribosomal_uL14_sf"/>
</dbReference>
<dbReference type="NCBIfam" id="TIGR01067">
    <property type="entry name" value="rplN_bact"/>
    <property type="match status" value="1"/>
</dbReference>
<dbReference type="PANTHER" id="PTHR11761">
    <property type="entry name" value="50S/60S RIBOSOMAL PROTEIN L14/L23"/>
    <property type="match status" value="1"/>
</dbReference>
<dbReference type="PANTHER" id="PTHR11761:SF3">
    <property type="entry name" value="LARGE RIBOSOMAL SUBUNIT PROTEIN UL14M"/>
    <property type="match status" value="1"/>
</dbReference>
<dbReference type="Pfam" id="PF00238">
    <property type="entry name" value="Ribosomal_L14"/>
    <property type="match status" value="1"/>
</dbReference>
<dbReference type="SMART" id="SM01374">
    <property type="entry name" value="Ribosomal_L14"/>
    <property type="match status" value="1"/>
</dbReference>
<dbReference type="SUPFAM" id="SSF50193">
    <property type="entry name" value="Ribosomal protein L14"/>
    <property type="match status" value="1"/>
</dbReference>
<dbReference type="PROSITE" id="PS00049">
    <property type="entry name" value="RIBOSOMAL_L14"/>
    <property type="match status" value="1"/>
</dbReference>